<dbReference type="EMBL" id="D21235">
    <property type="protein sequence ID" value="BAA04767.1"/>
    <property type="molecule type" value="mRNA"/>
</dbReference>
<dbReference type="EMBL" id="AF549209">
    <property type="protein sequence ID" value="AAN39383.1"/>
    <property type="molecule type" value="Genomic_DNA"/>
</dbReference>
<dbReference type="EMBL" id="BX448989">
    <property type="status" value="NOT_ANNOTATED_CDS"/>
    <property type="molecule type" value="mRNA"/>
</dbReference>
<dbReference type="EMBL" id="AB209713">
    <property type="protein sequence ID" value="BAD92950.1"/>
    <property type="status" value="ALT_INIT"/>
    <property type="molecule type" value="mRNA"/>
</dbReference>
<dbReference type="EMBL" id="AC092069">
    <property type="status" value="NOT_ANNOTATED_CDS"/>
    <property type="molecule type" value="Genomic_DNA"/>
</dbReference>
<dbReference type="EMBL" id="AD000092">
    <property type="protein sequence ID" value="AAB51177.1"/>
    <property type="molecule type" value="Genomic_DNA"/>
</dbReference>
<dbReference type="EMBL" id="BC014026">
    <property type="protein sequence ID" value="AAH14026.1"/>
    <property type="molecule type" value="mRNA"/>
</dbReference>
<dbReference type="EMBL" id="BC088364">
    <property type="protein sequence ID" value="AAH88364.1"/>
    <property type="molecule type" value="mRNA"/>
</dbReference>
<dbReference type="CCDS" id="CCDS12289.1">
    <molecule id="P54725-1"/>
</dbReference>
<dbReference type="CCDS" id="CCDS59357.1">
    <molecule id="P54725-2"/>
</dbReference>
<dbReference type="CCDS" id="CCDS59358.1">
    <molecule id="P54725-3"/>
</dbReference>
<dbReference type="PIR" id="S44443">
    <property type="entry name" value="S44443"/>
</dbReference>
<dbReference type="RefSeq" id="NP_001257291.1">
    <molecule id="P54725-3"/>
    <property type="nucleotide sequence ID" value="NM_001270362.2"/>
</dbReference>
<dbReference type="RefSeq" id="NP_001257292.1">
    <molecule id="P54725-2"/>
    <property type="nucleotide sequence ID" value="NM_001270363.2"/>
</dbReference>
<dbReference type="RefSeq" id="NP_005044.1">
    <molecule id="P54725-1"/>
    <property type="nucleotide sequence ID" value="NM_005053.4"/>
</dbReference>
<dbReference type="PDB" id="1DV0">
    <property type="method" value="NMR"/>
    <property type="chains" value="A=319-363"/>
</dbReference>
<dbReference type="PDB" id="1F4I">
    <property type="method" value="NMR"/>
    <property type="chains" value="A=319-363"/>
</dbReference>
<dbReference type="PDB" id="1IFY">
    <property type="method" value="NMR"/>
    <property type="chains" value="A=156-204"/>
</dbReference>
<dbReference type="PDB" id="1OQY">
    <property type="method" value="NMR"/>
    <property type="chains" value="A=1-363"/>
</dbReference>
<dbReference type="PDB" id="1P98">
    <property type="method" value="NMR"/>
    <property type="chains" value="A=1-78"/>
</dbReference>
<dbReference type="PDB" id="1P9D">
    <property type="method" value="NMR"/>
    <property type="chains" value="U=1-78"/>
</dbReference>
<dbReference type="PDB" id="1QZE">
    <property type="method" value="NMR"/>
    <property type="chains" value="A=2-363"/>
</dbReference>
<dbReference type="PDB" id="1TP4">
    <property type="method" value="NMR"/>
    <property type="chains" value="A=223-317"/>
</dbReference>
<dbReference type="PDB" id="2WYQ">
    <property type="method" value="X-ray"/>
    <property type="resolution" value="1.65 A"/>
    <property type="chains" value="A=1-82"/>
</dbReference>
<dbReference type="PDB" id="5XBO">
    <property type="method" value="NMR"/>
    <property type="chains" value="B=156-204"/>
</dbReference>
<dbReference type="PDB" id="6W2G">
    <property type="method" value="X-ray"/>
    <property type="resolution" value="1.10 A"/>
    <property type="chains" value="A/B=155-204"/>
</dbReference>
<dbReference type="PDB" id="6W2H">
    <property type="method" value="X-ray"/>
    <property type="resolution" value="1.60 A"/>
    <property type="chains" value="A=155-204"/>
</dbReference>
<dbReference type="PDB" id="6W2I">
    <property type="method" value="X-ray"/>
    <property type="resolution" value="1.45 A"/>
    <property type="chains" value="A=155-204"/>
</dbReference>
<dbReference type="PDB" id="6XQI">
    <property type="method" value="X-ray"/>
    <property type="resolution" value="2.34 A"/>
    <property type="chains" value="F/G=319-358"/>
</dbReference>
<dbReference type="PDB" id="6XQJ">
    <property type="method" value="NMR"/>
    <property type="chains" value="A=223-363"/>
</dbReference>
<dbReference type="PDB" id="7TGP">
    <property type="method" value="X-ray"/>
    <property type="resolution" value="1.40 A"/>
    <property type="chains" value="A=155-204"/>
</dbReference>
<dbReference type="PDB" id="8Q06">
    <property type="method" value="X-ray"/>
    <property type="resolution" value="1.90 A"/>
    <property type="chains" value="C/D=1-84"/>
</dbReference>
<dbReference type="PDBsum" id="1DV0"/>
<dbReference type="PDBsum" id="1F4I"/>
<dbReference type="PDBsum" id="1IFY"/>
<dbReference type="PDBsum" id="1OQY"/>
<dbReference type="PDBsum" id="1P98"/>
<dbReference type="PDBsum" id="1P9D"/>
<dbReference type="PDBsum" id="1QZE"/>
<dbReference type="PDBsum" id="1TP4"/>
<dbReference type="PDBsum" id="2WYQ"/>
<dbReference type="PDBsum" id="5XBO"/>
<dbReference type="PDBsum" id="6W2G"/>
<dbReference type="PDBsum" id="6W2H"/>
<dbReference type="PDBsum" id="6W2I"/>
<dbReference type="PDBsum" id="6XQI"/>
<dbReference type="PDBsum" id="6XQJ"/>
<dbReference type="PDBsum" id="7TGP"/>
<dbReference type="PDBsum" id="8Q06"/>
<dbReference type="BMRB" id="P54725"/>
<dbReference type="SMR" id="P54725"/>
<dbReference type="BioGRID" id="111823">
    <property type="interactions" value="321"/>
</dbReference>
<dbReference type="ComplexPortal" id="CPX-2672">
    <property type="entry name" value="XPC complex, RAD23A variant"/>
</dbReference>
<dbReference type="CORUM" id="P54725"/>
<dbReference type="DIP" id="DIP-34442N"/>
<dbReference type="FunCoup" id="P54725">
    <property type="interactions" value="3259"/>
</dbReference>
<dbReference type="IntAct" id="P54725">
    <property type="interactions" value="111"/>
</dbReference>
<dbReference type="MINT" id="P54725"/>
<dbReference type="STRING" id="9606.ENSP00000467024"/>
<dbReference type="GlyGen" id="P54725">
    <property type="glycosylation" value="4 sites, 1 O-linked glycan (3 sites)"/>
</dbReference>
<dbReference type="iPTMnet" id="P54725"/>
<dbReference type="MetOSite" id="P54725"/>
<dbReference type="PhosphoSitePlus" id="P54725"/>
<dbReference type="BioMuta" id="RAD23A"/>
<dbReference type="DMDM" id="1709983"/>
<dbReference type="jPOST" id="P54725"/>
<dbReference type="MassIVE" id="P54725"/>
<dbReference type="PaxDb" id="9606-ENSP00000467024"/>
<dbReference type="PeptideAtlas" id="P54725"/>
<dbReference type="ProteomicsDB" id="56700">
    <molecule id="P54725-1"/>
</dbReference>
<dbReference type="Pumba" id="P54725"/>
<dbReference type="Antibodypedia" id="13484">
    <property type="antibodies" value="484 antibodies from 36 providers"/>
</dbReference>
<dbReference type="DNASU" id="5886"/>
<dbReference type="Ensembl" id="ENST00000316856.7">
    <molecule id="P54725-3"/>
    <property type="protein sequence ID" value="ENSP00000321365.3"/>
    <property type="gene ID" value="ENSG00000179262.10"/>
</dbReference>
<dbReference type="Ensembl" id="ENST00000586534.6">
    <molecule id="P54725-1"/>
    <property type="protein sequence ID" value="ENSP00000467024.1"/>
    <property type="gene ID" value="ENSG00000179262.10"/>
</dbReference>
<dbReference type="Ensembl" id="ENST00000592268.5">
    <molecule id="P54725-2"/>
    <property type="protein sequence ID" value="ENSP00000468674.1"/>
    <property type="gene ID" value="ENSG00000179262.10"/>
</dbReference>
<dbReference type="GeneID" id="5886"/>
<dbReference type="KEGG" id="hsa:5886"/>
<dbReference type="MANE-Select" id="ENST00000586534.6">
    <property type="protein sequence ID" value="ENSP00000467024.1"/>
    <property type="RefSeq nucleotide sequence ID" value="NM_005053.4"/>
    <property type="RefSeq protein sequence ID" value="NP_005044.1"/>
</dbReference>
<dbReference type="UCSC" id="uc002mvw.3">
    <molecule id="P54725-1"/>
    <property type="organism name" value="human"/>
</dbReference>
<dbReference type="AGR" id="HGNC:9812"/>
<dbReference type="CTD" id="5886"/>
<dbReference type="DisGeNET" id="5886"/>
<dbReference type="GeneCards" id="RAD23A"/>
<dbReference type="HGNC" id="HGNC:9812">
    <property type="gene designation" value="RAD23A"/>
</dbReference>
<dbReference type="HPA" id="ENSG00000179262">
    <property type="expression patterns" value="Group enriched (skeletal muscle, tongue)"/>
</dbReference>
<dbReference type="MIM" id="600061">
    <property type="type" value="gene"/>
</dbReference>
<dbReference type="neXtProt" id="NX_P54725"/>
<dbReference type="OpenTargets" id="ENSG00000179262"/>
<dbReference type="PharmGKB" id="PA34172"/>
<dbReference type="VEuPathDB" id="HostDB:ENSG00000179262"/>
<dbReference type="eggNOG" id="KOG0011">
    <property type="taxonomic scope" value="Eukaryota"/>
</dbReference>
<dbReference type="GeneTree" id="ENSGT00390000012078"/>
<dbReference type="HOGENOM" id="CLU_040364_0_1_1"/>
<dbReference type="InParanoid" id="P54725"/>
<dbReference type="OMA" id="VACCVRI"/>
<dbReference type="OrthoDB" id="419317at2759"/>
<dbReference type="PAN-GO" id="P54725">
    <property type="GO annotations" value="6 GO annotations based on evolutionary models"/>
</dbReference>
<dbReference type="PhylomeDB" id="P54725"/>
<dbReference type="PathwayCommons" id="P54725"/>
<dbReference type="Reactome" id="R-HSA-5689877">
    <property type="pathway name" value="Josephin domain DUBs"/>
</dbReference>
<dbReference type="Reactome" id="R-HSA-5696394">
    <property type="pathway name" value="DNA Damage Recognition in GG-NER"/>
</dbReference>
<dbReference type="Reactome" id="R-HSA-5696395">
    <property type="pathway name" value="Formation of Incision Complex in GG-NER"/>
</dbReference>
<dbReference type="SignaLink" id="P54725"/>
<dbReference type="SIGNOR" id="P54725"/>
<dbReference type="BioGRID-ORCS" id="5886">
    <property type="hits" value="23 hits in 1162 CRISPR screens"/>
</dbReference>
<dbReference type="ChiTaRS" id="RAD23A">
    <property type="organism name" value="human"/>
</dbReference>
<dbReference type="EvolutionaryTrace" id="P54725"/>
<dbReference type="GeneWiki" id="RAD23A"/>
<dbReference type="GenomeRNAi" id="5886"/>
<dbReference type="Pharos" id="P54725">
    <property type="development level" value="Tbio"/>
</dbReference>
<dbReference type="PRO" id="PR:P54725"/>
<dbReference type="Proteomes" id="UP000005640">
    <property type="component" value="Chromosome 19"/>
</dbReference>
<dbReference type="RNAct" id="P54725">
    <property type="molecule type" value="protein"/>
</dbReference>
<dbReference type="Bgee" id="ENSG00000179262">
    <property type="expression patterns" value="Expressed in hindlimb stylopod muscle and 204 other cell types or tissues"/>
</dbReference>
<dbReference type="ExpressionAtlas" id="P54725">
    <property type="expression patterns" value="baseline and differential"/>
</dbReference>
<dbReference type="GO" id="GO:0005737">
    <property type="term" value="C:cytoplasm"/>
    <property type="evidence" value="ECO:0000314"/>
    <property type="project" value="CAFA"/>
</dbReference>
<dbReference type="GO" id="GO:0005829">
    <property type="term" value="C:cytosol"/>
    <property type="evidence" value="ECO:0000314"/>
    <property type="project" value="HPA"/>
</dbReference>
<dbReference type="GO" id="GO:0005794">
    <property type="term" value="C:Golgi apparatus"/>
    <property type="evidence" value="ECO:0000314"/>
    <property type="project" value="HPA"/>
</dbReference>
<dbReference type="GO" id="GO:0043231">
    <property type="term" value="C:intracellular membrane-bounded organelle"/>
    <property type="evidence" value="ECO:0000314"/>
    <property type="project" value="HPA"/>
</dbReference>
<dbReference type="GO" id="GO:0005654">
    <property type="term" value="C:nucleoplasm"/>
    <property type="evidence" value="ECO:0000314"/>
    <property type="project" value="HPA"/>
</dbReference>
<dbReference type="GO" id="GO:0005634">
    <property type="term" value="C:nucleus"/>
    <property type="evidence" value="ECO:0000314"/>
    <property type="project" value="CAFA"/>
</dbReference>
<dbReference type="GO" id="GO:0000502">
    <property type="term" value="C:proteasome complex"/>
    <property type="evidence" value="ECO:0007669"/>
    <property type="project" value="UniProtKB-KW"/>
</dbReference>
<dbReference type="GO" id="GO:0032991">
    <property type="term" value="C:protein-containing complex"/>
    <property type="evidence" value="ECO:0000315"/>
    <property type="project" value="CAFA"/>
</dbReference>
<dbReference type="GO" id="GO:0003684">
    <property type="term" value="F:damaged DNA binding"/>
    <property type="evidence" value="ECO:0007669"/>
    <property type="project" value="InterPro"/>
</dbReference>
<dbReference type="GO" id="GO:0019900">
    <property type="term" value="F:kinase binding"/>
    <property type="evidence" value="ECO:0000353"/>
    <property type="project" value="CAFA"/>
</dbReference>
<dbReference type="GO" id="GO:0031593">
    <property type="term" value="F:polyubiquitin modification-dependent protein binding"/>
    <property type="evidence" value="ECO:0000314"/>
    <property type="project" value="UniProtKB"/>
</dbReference>
<dbReference type="GO" id="GO:0070628">
    <property type="term" value="F:proteasome binding"/>
    <property type="evidence" value="ECO:0000318"/>
    <property type="project" value="GO_Central"/>
</dbReference>
<dbReference type="GO" id="GO:0003697">
    <property type="term" value="F:single-stranded DNA binding"/>
    <property type="evidence" value="ECO:0000304"/>
    <property type="project" value="ProtInc"/>
</dbReference>
<dbReference type="GO" id="GO:0043130">
    <property type="term" value="F:ubiquitin binding"/>
    <property type="evidence" value="ECO:0000318"/>
    <property type="project" value="GO_Central"/>
</dbReference>
<dbReference type="GO" id="GO:1990381">
    <property type="term" value="F:ubiquitin-specific protease binding"/>
    <property type="evidence" value="ECO:0000353"/>
    <property type="project" value="ParkinsonsUK-UCL"/>
</dbReference>
<dbReference type="GO" id="GO:0006289">
    <property type="term" value="P:nucleotide-excision repair"/>
    <property type="evidence" value="ECO:0000314"/>
    <property type="project" value="UniProtKB"/>
</dbReference>
<dbReference type="GO" id="GO:0045787">
    <property type="term" value="P:positive regulation of cell cycle"/>
    <property type="evidence" value="ECO:0000315"/>
    <property type="project" value="CAFA"/>
</dbReference>
<dbReference type="GO" id="GO:0032436">
    <property type="term" value="P:positive regulation of proteasomal ubiquitin-dependent protein catabolic process"/>
    <property type="evidence" value="ECO:0000315"/>
    <property type="project" value="CAFA"/>
</dbReference>
<dbReference type="GO" id="GO:0045070">
    <property type="term" value="P:positive regulation of viral genome replication"/>
    <property type="evidence" value="ECO:0000315"/>
    <property type="project" value="UniProtKB"/>
</dbReference>
<dbReference type="GO" id="GO:0043161">
    <property type="term" value="P:proteasome-mediated ubiquitin-dependent protein catabolic process"/>
    <property type="evidence" value="ECO:0000318"/>
    <property type="project" value="GO_Central"/>
</dbReference>
<dbReference type="GO" id="GO:0031648">
    <property type="term" value="P:protein destabilization"/>
    <property type="evidence" value="ECO:0000315"/>
    <property type="project" value="CAFA"/>
</dbReference>
<dbReference type="GO" id="GO:0032434">
    <property type="term" value="P:regulation of proteasomal ubiquitin-dependent protein catabolic process"/>
    <property type="evidence" value="ECO:0000314"/>
    <property type="project" value="UniProtKB"/>
</dbReference>
<dbReference type="CDD" id="cd14377">
    <property type="entry name" value="UBA1_Rad23"/>
    <property type="match status" value="1"/>
</dbReference>
<dbReference type="CDD" id="cd14427">
    <property type="entry name" value="UBA2_HR23A"/>
    <property type="match status" value="1"/>
</dbReference>
<dbReference type="CDD" id="cd17126">
    <property type="entry name" value="Ubl_HR23A"/>
    <property type="match status" value="1"/>
</dbReference>
<dbReference type="DisProt" id="DP00156"/>
<dbReference type="FunFam" id="1.10.10.540:FF:000001">
    <property type="entry name" value="UV excision repair protein RAD23 B"/>
    <property type="match status" value="1"/>
</dbReference>
<dbReference type="FunFam" id="1.10.8.10:FF:000002">
    <property type="entry name" value="UV excision repair protein RAD23 homolog"/>
    <property type="match status" value="1"/>
</dbReference>
<dbReference type="FunFam" id="1.10.8.10:FF:000003">
    <property type="entry name" value="UV excision repair protein RAD23 homolog"/>
    <property type="match status" value="1"/>
</dbReference>
<dbReference type="FunFam" id="3.10.20.90:FF:000053">
    <property type="entry name" value="UV excision repair protein RAD23 homolog A"/>
    <property type="match status" value="1"/>
</dbReference>
<dbReference type="Gene3D" id="1.10.8.10">
    <property type="entry name" value="DNA helicase RuvA subunit, C-terminal domain"/>
    <property type="match status" value="2"/>
</dbReference>
<dbReference type="Gene3D" id="3.10.20.90">
    <property type="entry name" value="Phosphatidylinositol 3-kinase Catalytic Subunit, Chain A, domain 1"/>
    <property type="match status" value="1"/>
</dbReference>
<dbReference type="Gene3D" id="1.10.10.540">
    <property type="entry name" value="XPC-binding domain"/>
    <property type="match status" value="1"/>
</dbReference>
<dbReference type="InterPro" id="IPR004806">
    <property type="entry name" value="Rad23"/>
</dbReference>
<dbReference type="InterPro" id="IPR041811">
    <property type="entry name" value="RAD23A/B_UBA1"/>
</dbReference>
<dbReference type="InterPro" id="IPR006636">
    <property type="entry name" value="STI1_HS-bd"/>
</dbReference>
<dbReference type="InterPro" id="IPR015940">
    <property type="entry name" value="UBA"/>
</dbReference>
<dbReference type="InterPro" id="IPR009060">
    <property type="entry name" value="UBA-like_sf"/>
</dbReference>
<dbReference type="InterPro" id="IPR000626">
    <property type="entry name" value="Ubiquitin-like_dom"/>
</dbReference>
<dbReference type="InterPro" id="IPR029071">
    <property type="entry name" value="Ubiquitin-like_domsf"/>
</dbReference>
<dbReference type="InterPro" id="IPR015360">
    <property type="entry name" value="XPC-bd"/>
</dbReference>
<dbReference type="InterPro" id="IPR036353">
    <property type="entry name" value="XPC-bd_sf"/>
</dbReference>
<dbReference type="NCBIfam" id="TIGR00601">
    <property type="entry name" value="rad23"/>
    <property type="match status" value="1"/>
</dbReference>
<dbReference type="PANTHER" id="PTHR10621">
    <property type="entry name" value="UV EXCISION REPAIR PROTEIN RAD23"/>
    <property type="match status" value="1"/>
</dbReference>
<dbReference type="PANTHER" id="PTHR10621:SF29">
    <property type="entry name" value="UV EXCISION REPAIR PROTEIN RAD23 HOMOLOG A"/>
    <property type="match status" value="1"/>
</dbReference>
<dbReference type="Pfam" id="PF00627">
    <property type="entry name" value="UBA"/>
    <property type="match status" value="2"/>
</dbReference>
<dbReference type="Pfam" id="PF00240">
    <property type="entry name" value="ubiquitin"/>
    <property type="match status" value="1"/>
</dbReference>
<dbReference type="Pfam" id="PF09280">
    <property type="entry name" value="XPC-binding"/>
    <property type="match status" value="1"/>
</dbReference>
<dbReference type="PRINTS" id="PR01839">
    <property type="entry name" value="RAD23PROTEIN"/>
</dbReference>
<dbReference type="SMART" id="SM00727">
    <property type="entry name" value="STI1"/>
    <property type="match status" value="1"/>
</dbReference>
<dbReference type="SMART" id="SM00165">
    <property type="entry name" value="UBA"/>
    <property type="match status" value="2"/>
</dbReference>
<dbReference type="SMART" id="SM00213">
    <property type="entry name" value="UBQ"/>
    <property type="match status" value="1"/>
</dbReference>
<dbReference type="SUPFAM" id="SSF46934">
    <property type="entry name" value="UBA-like"/>
    <property type="match status" value="2"/>
</dbReference>
<dbReference type="SUPFAM" id="SSF54236">
    <property type="entry name" value="Ubiquitin-like"/>
    <property type="match status" value="1"/>
</dbReference>
<dbReference type="SUPFAM" id="SSF101238">
    <property type="entry name" value="XPC-binding domain"/>
    <property type="match status" value="1"/>
</dbReference>
<dbReference type="PROSITE" id="PS50030">
    <property type="entry name" value="UBA"/>
    <property type="match status" value="2"/>
</dbReference>
<dbReference type="PROSITE" id="PS50053">
    <property type="entry name" value="UBIQUITIN_2"/>
    <property type="match status" value="1"/>
</dbReference>
<keyword id="KW-0002">3D-structure</keyword>
<keyword id="KW-0025">Alternative splicing</keyword>
<keyword id="KW-0227">DNA damage</keyword>
<keyword id="KW-0234">DNA repair</keyword>
<keyword id="KW-0945">Host-virus interaction</keyword>
<keyword id="KW-1017">Isopeptide bond</keyword>
<keyword id="KW-0539">Nucleus</keyword>
<keyword id="KW-0597">Phosphoprotein</keyword>
<keyword id="KW-0647">Proteasome</keyword>
<keyword id="KW-1267">Proteomics identification</keyword>
<keyword id="KW-1185">Reference proteome</keyword>
<keyword id="KW-0677">Repeat</keyword>
<keyword id="KW-0832">Ubl conjugation</keyword>
<proteinExistence type="evidence at protein level"/>
<evidence type="ECO:0000250" key="1">
    <source>
        <dbReference type="UniProtKB" id="P54726"/>
    </source>
</evidence>
<evidence type="ECO:0000255" key="2">
    <source>
        <dbReference type="PROSITE-ProRule" id="PRU00212"/>
    </source>
</evidence>
<evidence type="ECO:0000255" key="3">
    <source>
        <dbReference type="PROSITE-ProRule" id="PRU00214"/>
    </source>
</evidence>
<evidence type="ECO:0000256" key="4">
    <source>
        <dbReference type="SAM" id="MobiDB-lite"/>
    </source>
</evidence>
<evidence type="ECO:0000269" key="5">
    <source>
    </source>
</evidence>
<evidence type="ECO:0000269" key="6">
    <source>
    </source>
</evidence>
<evidence type="ECO:0000269" key="7">
    <source>
    </source>
</evidence>
<evidence type="ECO:0000269" key="8">
    <source>
    </source>
</evidence>
<evidence type="ECO:0000269" key="9">
    <source>
    </source>
</evidence>
<evidence type="ECO:0000269" key="10">
    <source>
    </source>
</evidence>
<evidence type="ECO:0000269" key="11">
    <source>
    </source>
</evidence>
<evidence type="ECO:0000269" key="12">
    <source>
    </source>
</evidence>
<evidence type="ECO:0000269" key="13">
    <source>
    </source>
</evidence>
<evidence type="ECO:0000269" key="14">
    <source>
    </source>
</evidence>
<evidence type="ECO:0000269" key="15">
    <source>
    </source>
</evidence>
<evidence type="ECO:0000269" key="16">
    <source ref="2"/>
</evidence>
<evidence type="ECO:0000269" key="17">
    <source ref="4"/>
</evidence>
<evidence type="ECO:0000303" key="18">
    <source>
    </source>
</evidence>
<evidence type="ECO:0000303" key="19">
    <source ref="3"/>
</evidence>
<evidence type="ECO:0000303" key="20">
    <source ref="4"/>
</evidence>
<evidence type="ECO:0000305" key="21"/>
<evidence type="ECO:0007744" key="22">
    <source>
    </source>
</evidence>
<evidence type="ECO:0007744" key="23">
    <source>
    </source>
</evidence>
<evidence type="ECO:0007744" key="24">
    <source>
    </source>
</evidence>
<evidence type="ECO:0007744" key="25">
    <source>
    </source>
</evidence>
<evidence type="ECO:0007744" key="26">
    <source>
    </source>
</evidence>
<evidence type="ECO:0007744" key="27">
    <source>
    </source>
</evidence>
<evidence type="ECO:0007829" key="28">
    <source>
        <dbReference type="PDB" id="1OQY"/>
    </source>
</evidence>
<evidence type="ECO:0007829" key="29">
    <source>
        <dbReference type="PDB" id="1P98"/>
    </source>
</evidence>
<evidence type="ECO:0007829" key="30">
    <source>
        <dbReference type="PDB" id="2WYQ"/>
    </source>
</evidence>
<evidence type="ECO:0007829" key="31">
    <source>
        <dbReference type="PDB" id="6W2G"/>
    </source>
</evidence>
<evidence type="ECO:0007829" key="32">
    <source>
        <dbReference type="PDB" id="6XQI"/>
    </source>
</evidence>
<feature type="chain" id="PRO_0000114904" description="UV excision repair protein RAD23 homolog A">
    <location>
        <begin position="1"/>
        <end position="363"/>
    </location>
</feature>
<feature type="domain" description="Ubiquitin-like" evidence="3">
    <location>
        <begin position="1"/>
        <end position="81"/>
    </location>
</feature>
<feature type="domain" description="UBA 1" evidence="2">
    <location>
        <begin position="161"/>
        <end position="201"/>
    </location>
</feature>
<feature type="domain" description="UBA 2" evidence="2">
    <location>
        <begin position="318"/>
        <end position="358"/>
    </location>
</feature>
<feature type="region of interest" description="Disordered" evidence="4">
    <location>
        <begin position="81"/>
        <end position="160"/>
    </location>
</feature>
<feature type="region of interest" description="Disordered" evidence="4">
    <location>
        <begin position="203"/>
        <end position="227"/>
    </location>
</feature>
<feature type="region of interest" description="HIV-1 vpr binding">
    <location>
        <begin position="319"/>
        <end position="363"/>
    </location>
</feature>
<feature type="compositionally biased region" description="Low complexity" evidence="4">
    <location>
        <begin position="85"/>
        <end position="103"/>
    </location>
</feature>
<feature type="compositionally biased region" description="Low complexity" evidence="4">
    <location>
        <begin position="126"/>
        <end position="147"/>
    </location>
</feature>
<feature type="compositionally biased region" description="Polar residues" evidence="4">
    <location>
        <begin position="213"/>
        <end position="222"/>
    </location>
</feature>
<feature type="modified residue" description="Phosphoserine" evidence="23 26">
    <location>
        <position position="123"/>
    </location>
</feature>
<feature type="modified residue" description="Phosphoserine" evidence="26">
    <location>
        <position position="128"/>
    </location>
</feature>
<feature type="modified residue" description="Phosphoserine" evidence="23 26">
    <location>
        <position position="133"/>
    </location>
</feature>
<feature type="modified residue" description="Phosphoserine" evidence="26">
    <location>
        <position position="136"/>
    </location>
</feature>
<feature type="modified residue" description="Phosphoserine" evidence="1">
    <location>
        <position position="138"/>
    </location>
</feature>
<feature type="modified residue" description="Phosphoserine" evidence="23 27">
    <location>
        <position position="205"/>
    </location>
</feature>
<feature type="modified residue" description="Phosphoserine" evidence="23 27">
    <location>
        <position position="295"/>
    </location>
</feature>
<feature type="modified residue" description="Phosphoserine" evidence="22 24 25">
    <location>
        <position position="357"/>
    </location>
</feature>
<feature type="cross-link" description="Glycyl lysine isopeptide (Lys-Gly) (interchain with G-Cter in ubiquitin)">
    <location>
        <position position="122"/>
    </location>
</feature>
<feature type="splice variant" id="VSP_054694" description="In isoform 3." evidence="18 20">
    <location>
        <position position="226"/>
    </location>
</feature>
<feature type="splice variant" id="VSP_047565" description="In isoform 2." evidence="19">
    <location>
        <begin position="272"/>
        <end position="326"/>
    </location>
</feature>
<feature type="sequence variant" id="VAR_016251" description="In dbSNP:rs11558955." evidence="16 17">
    <original>T</original>
    <variation>A</variation>
    <location>
        <position position="131"/>
    </location>
</feature>
<feature type="sequence variant" id="VAR_020377" description="In dbSNP:rs4987203.">
    <original>R</original>
    <variation>Q</variation>
    <location>
        <position position="179"/>
    </location>
</feature>
<feature type="sequence variant" id="VAR_016252" description="In dbSNP:rs4987202." evidence="16">
    <original>T</original>
    <variation>M</variation>
    <location>
        <position position="200"/>
    </location>
</feature>
<feature type="mutagenesis site" description="No effect on interaction with EEF1A1." evidence="10">
    <original>K</original>
    <variation>A</variation>
    <location>
        <position position="8"/>
    </location>
</feature>
<feature type="mutagenesis site" description="Abolishes interaction with PSMD4; when associated with T-49." evidence="9">
    <original>T</original>
    <variation>A</variation>
    <location>
        <position position="9"/>
    </location>
</feature>
<feature type="mutagenesis site" description="Impairs UBL-UBA domain interaction and enhances ubiquitin-binding; when associated with Glu-47." evidence="12">
    <original>L</original>
    <variation>E</variation>
    <location>
        <position position="10"/>
    </location>
</feature>
<feature type="mutagenesis site" description="No effect on UBL-UBA domain interaction." evidence="12">
    <original>K</original>
    <variation>A</variation>
    <location>
        <position position="47"/>
    </location>
</feature>
<feature type="mutagenesis site" description="Impairs UBL-UBA domain interaction and enhances ubiquitin-binding; when associated with Glu-10." evidence="12">
    <original>K</original>
    <variation>E</variation>
    <location>
        <position position="47"/>
    </location>
</feature>
<feature type="mutagenesis site" description="Impairs UBL-UBA domain interaction and enhances ubiquitin-binding; when associated with Glu-77." evidence="12">
    <original>K</original>
    <variation>E</variation>
    <location>
        <position position="47"/>
    </location>
</feature>
<feature type="mutagenesis site" description="Impairs interaction with PSMD4." evidence="8 9">
    <original>I</original>
    <variation>A</variation>
    <location>
        <position position="49"/>
    </location>
</feature>
<feature type="mutagenesis site" description="Abolishes interaction with PSMD4; when associated with A-9." evidence="8 9">
    <original>I</original>
    <variation>T</variation>
    <location>
        <position position="49"/>
    </location>
</feature>
<feature type="mutagenesis site" description="Impairs interaction with PSMD4." evidence="8">
    <original>I</original>
    <variation>A</variation>
    <location>
        <position position="54"/>
    </location>
</feature>
<feature type="mutagenesis site" description="Impairs interaction with PSMD4." evidence="8">
    <original>F</original>
    <variation>A</variation>
    <location>
        <position position="71"/>
    </location>
</feature>
<feature type="mutagenesis site" description="Impairs UBL-UBA domain interaction and enhances ubiquitin-binding; when associated with Glu-47." evidence="8 12">
    <original>T</original>
    <variation>E</variation>
    <location>
        <position position="77"/>
    </location>
</feature>
<feature type="mutagenesis site" description="No effect on interaction with PSMD4." evidence="8 12">
    <original>T</original>
    <variation>S</variation>
    <location>
        <position position="77"/>
    </location>
</feature>
<feature type="mutagenesis site" description="Increases interaction with PSMD1 and PSMC1." evidence="10">
    <original>T</original>
    <variation>P</variation>
    <location>
        <position position="79"/>
    </location>
</feature>
<feature type="mutagenesis site" description="Abolishes interaction with HIV-1 vpr." evidence="7">
    <original>P</original>
    <variation>E</variation>
    <location>
        <position position="333"/>
    </location>
</feature>
<feature type="strand" evidence="30">
    <location>
        <begin position="3"/>
        <end position="9"/>
    </location>
</feature>
<feature type="turn" evidence="28">
    <location>
        <begin position="10"/>
        <end position="12"/>
    </location>
</feature>
<feature type="strand" evidence="30">
    <location>
        <begin position="14"/>
        <end position="19"/>
    </location>
</feature>
<feature type="strand" evidence="29">
    <location>
        <begin position="21"/>
        <end position="23"/>
    </location>
</feature>
<feature type="helix" evidence="30">
    <location>
        <begin position="25"/>
        <end position="36"/>
    </location>
</feature>
<feature type="turn" evidence="30">
    <location>
        <begin position="38"/>
        <end position="40"/>
    </location>
</feature>
<feature type="helix" evidence="30">
    <location>
        <begin position="43"/>
        <end position="45"/>
    </location>
</feature>
<feature type="strand" evidence="30">
    <location>
        <begin position="46"/>
        <end position="50"/>
    </location>
</feature>
<feature type="strand" evidence="29">
    <location>
        <begin position="53"/>
        <end position="55"/>
    </location>
</feature>
<feature type="strand" evidence="28">
    <location>
        <begin position="57"/>
        <end position="60"/>
    </location>
</feature>
<feature type="helix" evidence="30">
    <location>
        <begin position="61"/>
        <end position="64"/>
    </location>
</feature>
<feature type="strand" evidence="30">
    <location>
        <begin position="70"/>
        <end position="76"/>
    </location>
</feature>
<feature type="strand" evidence="28">
    <location>
        <begin position="81"/>
        <end position="83"/>
    </location>
</feature>
<feature type="strand" evidence="28">
    <location>
        <begin position="96"/>
        <end position="98"/>
    </location>
</feature>
<feature type="strand" evidence="28">
    <location>
        <begin position="106"/>
        <end position="108"/>
    </location>
</feature>
<feature type="strand" evidence="28">
    <location>
        <begin position="116"/>
        <end position="119"/>
    </location>
</feature>
<feature type="helix" evidence="31">
    <location>
        <begin position="160"/>
        <end position="171"/>
    </location>
</feature>
<feature type="turn" evidence="31">
    <location>
        <begin position="172"/>
        <end position="174"/>
    </location>
</feature>
<feature type="helix" evidence="31">
    <location>
        <begin position="177"/>
        <end position="186"/>
    </location>
</feature>
<feature type="turn" evidence="31">
    <location>
        <begin position="187"/>
        <end position="189"/>
    </location>
</feature>
<feature type="helix" evidence="31">
    <location>
        <begin position="191"/>
        <end position="200"/>
    </location>
</feature>
<feature type="helix" evidence="28">
    <location>
        <begin position="233"/>
        <end position="237"/>
    </location>
</feature>
<feature type="helix" evidence="28">
    <location>
        <begin position="239"/>
        <end position="246"/>
    </location>
</feature>
<feature type="turn" evidence="28">
    <location>
        <begin position="248"/>
        <end position="250"/>
    </location>
</feature>
<feature type="helix" evidence="28">
    <location>
        <begin position="254"/>
        <end position="259"/>
    </location>
</feature>
<feature type="turn" evidence="28">
    <location>
        <begin position="260"/>
        <end position="265"/>
    </location>
</feature>
<feature type="helix" evidence="28">
    <location>
        <begin position="267"/>
        <end position="285"/>
    </location>
</feature>
<feature type="strand" evidence="28">
    <location>
        <begin position="298"/>
        <end position="301"/>
    </location>
</feature>
<feature type="turn" evidence="28">
    <location>
        <begin position="318"/>
        <end position="320"/>
    </location>
</feature>
<feature type="helix" evidence="32">
    <location>
        <begin position="321"/>
        <end position="329"/>
    </location>
</feature>
<feature type="helix" evidence="32">
    <location>
        <begin position="334"/>
        <end position="343"/>
    </location>
</feature>
<feature type="turn" evidence="32">
    <location>
        <begin position="344"/>
        <end position="346"/>
    </location>
</feature>
<feature type="helix" evidence="32">
    <location>
        <begin position="348"/>
        <end position="356"/>
    </location>
</feature>
<organism>
    <name type="scientific">Homo sapiens</name>
    <name type="common">Human</name>
    <dbReference type="NCBI Taxonomy" id="9606"/>
    <lineage>
        <taxon>Eukaryota</taxon>
        <taxon>Metazoa</taxon>
        <taxon>Chordata</taxon>
        <taxon>Craniata</taxon>
        <taxon>Vertebrata</taxon>
        <taxon>Euteleostomi</taxon>
        <taxon>Mammalia</taxon>
        <taxon>Eutheria</taxon>
        <taxon>Euarchontoglires</taxon>
        <taxon>Primates</taxon>
        <taxon>Haplorrhini</taxon>
        <taxon>Catarrhini</taxon>
        <taxon>Hominidae</taxon>
        <taxon>Homo</taxon>
    </lineage>
</organism>
<reference key="1">
    <citation type="journal article" date="1994" name="EMBO J.">
        <title>Purification and cloning of a nucleotide excision repair complex involving the Xeroderma pigmentosum group C protein and a human homologue of yeast RAD23.</title>
        <authorList>
            <person name="Masutani C."/>
            <person name="Sugasawa K."/>
            <person name="Yanagisawa J."/>
            <person name="Sonoyama T."/>
            <person name="Ui M."/>
            <person name="Enomoto T."/>
            <person name="Takio K."/>
            <person name="Tanaka K."/>
            <person name="van der Spek P.J."/>
            <person name="Bootsma D."/>
            <person name="Hoeijmakers J.H.J."/>
            <person name="Hanaoka F."/>
        </authorList>
    </citation>
    <scope>NUCLEOTIDE SEQUENCE [MRNA] (ISOFORM 1)</scope>
</reference>
<reference key="2">
    <citation type="submission" date="2002-10" db="EMBL/GenBank/DDBJ databases">
        <authorList>
            <consortium name="NIEHS SNPs program"/>
        </authorList>
    </citation>
    <scope>NUCLEOTIDE SEQUENCE [GENOMIC DNA]</scope>
    <scope>VARIANTS ALA-131 AND MET-200</scope>
</reference>
<reference key="3">
    <citation type="submission" date="2003-04" db="EMBL/GenBank/DDBJ databases">
        <title>Full-length cDNA libraries and normalization.</title>
        <authorList>
            <person name="Li W.B."/>
            <person name="Gruber C."/>
            <person name="Jessee J."/>
            <person name="Polayes D."/>
        </authorList>
    </citation>
    <scope>NUCLEOTIDE SEQUENCE [LARGE SCALE MRNA] (ISOFORM 2)</scope>
    <source>
        <tissue>Fetal liver</tissue>
    </source>
</reference>
<reference key="4">
    <citation type="submission" date="2005-03" db="EMBL/GenBank/DDBJ databases">
        <title>Homo sapiens protein coding cDNA.</title>
        <authorList>
            <person name="Totoki Y."/>
            <person name="Toyoda A."/>
            <person name="Takeda T."/>
            <person name="Sakaki Y."/>
            <person name="Tanaka A."/>
            <person name="Yokoyama S."/>
            <person name="Ohara O."/>
            <person name="Nagase T."/>
            <person name="Kikuno R.F."/>
        </authorList>
    </citation>
    <scope>NUCLEOTIDE SEQUENCE [LARGE SCALE MRNA] (ISOFORM 3)</scope>
    <scope>VARIANT ALA-131</scope>
    <source>
        <tissue>Brain</tissue>
    </source>
</reference>
<reference key="5">
    <citation type="journal article" date="2004" name="Nature">
        <title>The DNA sequence and biology of human chromosome 19.</title>
        <authorList>
            <person name="Grimwood J."/>
            <person name="Gordon L.A."/>
            <person name="Olsen A.S."/>
            <person name="Terry A."/>
            <person name="Schmutz J."/>
            <person name="Lamerdin J.E."/>
            <person name="Hellsten U."/>
            <person name="Goodstein D."/>
            <person name="Couronne O."/>
            <person name="Tran-Gyamfi M."/>
            <person name="Aerts A."/>
            <person name="Altherr M."/>
            <person name="Ashworth L."/>
            <person name="Bajorek E."/>
            <person name="Black S."/>
            <person name="Branscomb E."/>
            <person name="Caenepeel S."/>
            <person name="Carrano A.V."/>
            <person name="Caoile C."/>
            <person name="Chan Y.M."/>
            <person name="Christensen M."/>
            <person name="Cleland C.A."/>
            <person name="Copeland A."/>
            <person name="Dalin E."/>
            <person name="Dehal P."/>
            <person name="Denys M."/>
            <person name="Detter J.C."/>
            <person name="Escobar J."/>
            <person name="Flowers D."/>
            <person name="Fotopulos D."/>
            <person name="Garcia C."/>
            <person name="Georgescu A.M."/>
            <person name="Glavina T."/>
            <person name="Gomez M."/>
            <person name="Gonzales E."/>
            <person name="Groza M."/>
            <person name="Hammon N."/>
            <person name="Hawkins T."/>
            <person name="Haydu L."/>
            <person name="Ho I."/>
            <person name="Huang W."/>
            <person name="Israni S."/>
            <person name="Jett J."/>
            <person name="Kadner K."/>
            <person name="Kimball H."/>
            <person name="Kobayashi A."/>
            <person name="Larionov V."/>
            <person name="Leem S.-H."/>
            <person name="Lopez F."/>
            <person name="Lou Y."/>
            <person name="Lowry S."/>
            <person name="Malfatti S."/>
            <person name="Martinez D."/>
            <person name="McCready P.M."/>
            <person name="Medina C."/>
            <person name="Morgan J."/>
            <person name="Nelson K."/>
            <person name="Nolan M."/>
            <person name="Ovcharenko I."/>
            <person name="Pitluck S."/>
            <person name="Pollard M."/>
            <person name="Popkie A.P."/>
            <person name="Predki P."/>
            <person name="Quan G."/>
            <person name="Ramirez L."/>
            <person name="Rash S."/>
            <person name="Retterer J."/>
            <person name="Rodriguez A."/>
            <person name="Rogers S."/>
            <person name="Salamov A."/>
            <person name="Salazar A."/>
            <person name="She X."/>
            <person name="Smith D."/>
            <person name="Slezak T."/>
            <person name="Solovyev V."/>
            <person name="Thayer N."/>
            <person name="Tice H."/>
            <person name="Tsai M."/>
            <person name="Ustaszewska A."/>
            <person name="Vo N."/>
            <person name="Wagner M."/>
            <person name="Wheeler J."/>
            <person name="Wu K."/>
            <person name="Xie G."/>
            <person name="Yang J."/>
            <person name="Dubchak I."/>
            <person name="Furey T.S."/>
            <person name="DeJong P."/>
            <person name="Dickson M."/>
            <person name="Gordon D."/>
            <person name="Eichler E.E."/>
            <person name="Pennacchio L.A."/>
            <person name="Richardson P."/>
            <person name="Stubbs L."/>
            <person name="Rokhsar D.S."/>
            <person name="Myers R.M."/>
            <person name="Rubin E.M."/>
            <person name="Lucas S.M."/>
        </authorList>
    </citation>
    <scope>NUCLEOTIDE SEQUENCE [LARGE SCALE GENOMIC DNA]</scope>
</reference>
<reference key="6">
    <citation type="journal article" date="2004" name="Genome Res.">
        <title>The status, quality, and expansion of the NIH full-length cDNA project: the Mammalian Gene Collection (MGC).</title>
        <authorList>
            <consortium name="The MGC Project Team"/>
        </authorList>
    </citation>
    <scope>NUCLEOTIDE SEQUENCE [LARGE SCALE MRNA] (ISOFORMS 1 AND 3)</scope>
    <source>
        <tissue>Pancreas</tissue>
        <tissue>Testis</tissue>
    </source>
</reference>
<reference key="7">
    <citation type="journal article" date="1997" name="J. Virol.">
        <title>Human immunodeficiency virus type 1 Vpr interacts with HHR23A, a cellular protein implicated in nucleotide excision DNA repair.</title>
        <authorList>
            <person name="Withers-Ward E.S."/>
            <person name="Jowett J.B."/>
            <person name="Stewart S.A."/>
            <person name="Xie Y.M."/>
            <person name="Garfinkel A."/>
            <person name="Shibagaki Y."/>
            <person name="Chow S.A."/>
            <person name="Shah N."/>
            <person name="Hanaoka F."/>
            <person name="Sawitz D.G."/>
            <person name="Armstrong R.W."/>
            <person name="Souza L.M."/>
            <person name="Chen I.S."/>
        </authorList>
    </citation>
    <scope>INTERACTION WITH HIV-1 VPR (MICROBIAL INFECTION)</scope>
</reference>
<reference key="8">
    <citation type="journal article" date="1997" name="Mol. Cell. Biol.">
        <title>Two human homologs of Rad23 are functionally interchangeable in complex formation and stimulation of XPC repair activity.</title>
        <authorList>
            <person name="Sugasawa K."/>
            <person name="Ng J.M."/>
            <person name="Masutani C."/>
            <person name="Maekawa T."/>
            <person name="Uchida A."/>
            <person name="van der Spek P.J."/>
            <person name="Eker A.P."/>
            <person name="Rademakers S."/>
            <person name="Visser C."/>
            <person name="Aboussekhra A."/>
            <person name="Wood R.D."/>
            <person name="Hanaoka F."/>
            <person name="Bootsma D."/>
            <person name="Hoeijmakers J.H."/>
        </authorList>
    </citation>
    <scope>FUNCTION IN DNA REPAIR</scope>
</reference>
<reference key="9">
    <citation type="journal article" date="1999" name="J. Biol. Chem.">
        <title>Interaction of hHR23 with S5a. The ubiquitin-like domain of hHR23 mediates interaction with S5a subunit of 26 S proteasome.</title>
        <authorList>
            <person name="Hiyama H."/>
            <person name="Yokoi M."/>
            <person name="Masutani C."/>
            <person name="Sugasawa K."/>
            <person name="Maekawa T."/>
            <person name="Tanaka K."/>
            <person name="Hoeijmakers J.H."/>
            <person name="Hanaoka F."/>
        </authorList>
    </citation>
    <scope>INTERACTION WITH PSMD4</scope>
</reference>
<reference key="10">
    <citation type="journal article" date="2000" name="Hum. Mol. Genet.">
        <title>Ataxin-3, the MJD1 gene product, interacts with the two human homologs of yeast DNA repair protein RAD23, HHR23A and HHR23B.</title>
        <authorList>
            <person name="Wang G."/>
            <person name="Sawai N."/>
            <person name="Kotliarova S."/>
            <person name="Kanazawa I."/>
            <person name="Nukina N."/>
        </authorList>
    </citation>
    <scope>INTERACTION WITH ATXN3</scope>
</reference>
<reference key="11">
    <citation type="journal article" date="2003" name="Biochemistry">
        <title>Ubiquitin recognition by the DNA repair protein hHR23a.</title>
        <authorList>
            <person name="Wang Q."/>
            <person name="Goh A.M."/>
            <person name="Howley P.M."/>
            <person name="Walters K.J."/>
        </authorList>
    </citation>
    <scope>FUNCTION</scope>
    <scope>POLYUBIQUITIN-BINDING</scope>
</reference>
<reference key="12">
    <citation type="journal article" date="2003" name="J. Biol. Chem.">
        <title>Rad23 ubiquitin-associated domains (UBA) inhibit 26 S proteasome-catalyzed proteolysis by sequestering lysine 48-linked polyubiquitin chains.</title>
        <authorList>
            <person name="Raasi S."/>
            <person name="Pickart C.M."/>
        </authorList>
    </citation>
    <scope>FUNCTION IN PROTEASOMAL DEGRADATION</scope>
    <scope>POLYUBIQUITIN-BINDING</scope>
</reference>
<reference key="13">
    <citation type="journal article" date="2004" name="J. Mol. Biol.">
        <title>Binding of polyubiquitin chains to ubiquitin-associated (UBA) domains of HHR23A.</title>
        <authorList>
            <person name="Raasi S."/>
            <person name="Orlov I."/>
            <person name="Fleming K.G."/>
            <person name="Pickart C.M."/>
        </authorList>
    </citation>
    <scope>FUNCTION IN POLYUBIQUITIN-BINDING</scope>
</reference>
<reference key="14">
    <citation type="journal article" date="2006" name="FEBS Lett.">
        <title>Evidence for distinct functions for human DNA repair factors hHR23A and hHR23B.</title>
        <authorList>
            <person name="Chen L."/>
            <person name="Madura K."/>
        </authorList>
    </citation>
    <scope>INTERACTION WITH PSMD1; PSMC1 AND EEF1A1</scope>
    <scope>MUTAGENESIS OF LYS-8 AND THR-79</scope>
</reference>
<reference key="15">
    <citation type="journal article" date="2007" name="J. Mol. Biol.">
        <title>Ubiquitin receptor proteins hHR23a and hPLIC2 interact.</title>
        <authorList>
            <person name="Kang Y."/>
            <person name="Zhang N."/>
            <person name="Koepp D.M."/>
            <person name="Walters K.J."/>
        </authorList>
    </citation>
    <scope>INTERACTION WITH UBQLN2</scope>
</reference>
<reference key="16">
    <citation type="journal article" date="2007" name="Science">
        <title>ATM and ATR substrate analysis reveals extensive protein networks responsive to DNA damage.</title>
        <authorList>
            <person name="Matsuoka S."/>
            <person name="Ballif B.A."/>
            <person name="Smogorzewska A."/>
            <person name="McDonald E.R. III"/>
            <person name="Hurov K.E."/>
            <person name="Luo J."/>
            <person name="Bakalarski C.E."/>
            <person name="Zhao Z."/>
            <person name="Solimini N."/>
            <person name="Lerenthal Y."/>
            <person name="Shiloh Y."/>
            <person name="Gygi S.P."/>
            <person name="Elledge S.J."/>
        </authorList>
    </citation>
    <scope>PHOSPHORYLATION [LARGE SCALE ANALYSIS] AT SER-357</scope>
    <scope>IDENTIFICATION BY MASS SPECTROMETRY [LARGE SCALE ANALYSIS]</scope>
    <source>
        <tissue>Embryonic kidney</tissue>
    </source>
</reference>
<reference key="17">
    <citation type="journal article" date="2008" name="BMC Biochem.">
        <title>Components of the ubiquitin-proteasome pathway compete for surfaces on Rad23 family proteins.</title>
        <authorList>
            <person name="Goh A.M."/>
            <person name="Walters K.J."/>
            <person name="Elsasser S."/>
            <person name="Verma R."/>
            <person name="Deshaies R.J."/>
            <person name="Finley D."/>
            <person name="Howley P.M."/>
        </authorList>
    </citation>
    <scope>MUTAGENESIS OF LEU-10; LYS-47 AND THR-77</scope>
</reference>
<reference key="18">
    <citation type="journal article" date="2008" name="Proc. Natl. Acad. Sci. U.S.A.">
        <title>A quantitative atlas of mitotic phosphorylation.</title>
        <authorList>
            <person name="Dephoure N."/>
            <person name="Zhou C."/>
            <person name="Villen J."/>
            <person name="Beausoleil S.A."/>
            <person name="Bakalarski C.E."/>
            <person name="Elledge S.J."/>
            <person name="Gygi S.P."/>
        </authorList>
    </citation>
    <scope>PHOSPHORYLATION [LARGE SCALE ANALYSIS] AT SER-123; SER-133; SER-205 AND SER-295</scope>
    <scope>IDENTIFICATION BY MASS SPECTROMETRY [LARGE SCALE ANALYSIS]</scope>
    <source>
        <tissue>Cervix carcinoma</tissue>
    </source>
</reference>
<reference key="19">
    <citation type="journal article" date="2009" name="Sci. Signal.">
        <title>Quantitative phosphoproteomic analysis of T cell receptor signaling reveals system-wide modulation of protein-protein interactions.</title>
        <authorList>
            <person name="Mayya V."/>
            <person name="Lundgren D.H."/>
            <person name="Hwang S.-I."/>
            <person name="Rezaul K."/>
            <person name="Wu L."/>
            <person name="Eng J.K."/>
            <person name="Rodionov V."/>
            <person name="Han D.K."/>
        </authorList>
    </citation>
    <scope>PHOSPHORYLATION [LARGE SCALE ANALYSIS] AT SER-357</scope>
    <scope>IDENTIFICATION BY MASS SPECTROMETRY [LARGE SCALE ANALYSIS]</scope>
    <source>
        <tissue>Leukemic T-cell</tissue>
    </source>
</reference>
<reference key="20">
    <citation type="journal article" date="2010" name="PLoS ONE">
        <title>HIV-1 replication through hHR23A-mediated interaction of Vpr with 26S proteasome.</title>
        <authorList>
            <person name="Li G."/>
            <person name="Elder R.T."/>
            <person name="Dubrovsky L."/>
            <person name="Liang D."/>
            <person name="Pushkarsky T."/>
            <person name="Chiu K."/>
            <person name="Fan T."/>
            <person name="Sire J."/>
            <person name="Bukrinsky M."/>
            <person name="Zhao R.Y."/>
        </authorList>
    </citation>
    <scope>FUNCTION (MICROBIAL INFECTION)</scope>
</reference>
<reference key="21">
    <citation type="journal article" date="2010" name="Sci. Signal.">
        <title>Quantitative phosphoproteomics reveals widespread full phosphorylation site occupancy during mitosis.</title>
        <authorList>
            <person name="Olsen J.V."/>
            <person name="Vermeulen M."/>
            <person name="Santamaria A."/>
            <person name="Kumar C."/>
            <person name="Miller M.L."/>
            <person name="Jensen L.J."/>
            <person name="Gnad F."/>
            <person name="Cox J."/>
            <person name="Jensen T.S."/>
            <person name="Nigg E.A."/>
            <person name="Brunak S."/>
            <person name="Mann M."/>
        </authorList>
    </citation>
    <scope>PHOSPHORYLATION [LARGE SCALE ANALYSIS] AT SER-357</scope>
    <scope>IDENTIFICATION BY MASS SPECTROMETRY [LARGE SCALE ANALYSIS]</scope>
    <source>
        <tissue>Cervix carcinoma</tissue>
    </source>
</reference>
<reference key="22">
    <citation type="journal article" date="2011" name="BMC Syst. Biol.">
        <title>Initial characterization of the human central proteome.</title>
        <authorList>
            <person name="Burkard T.R."/>
            <person name="Planyavsky M."/>
            <person name="Kaupe I."/>
            <person name="Breitwieser F.P."/>
            <person name="Buerckstuemmer T."/>
            <person name="Bennett K.L."/>
            <person name="Superti-Furga G."/>
            <person name="Colinge J."/>
        </authorList>
    </citation>
    <scope>IDENTIFICATION BY MASS SPECTROMETRY [LARGE SCALE ANALYSIS]</scope>
</reference>
<reference key="23">
    <citation type="journal article" date="2011" name="Sci. Signal.">
        <title>System-wide temporal characterization of the proteome and phosphoproteome of human embryonic stem cell differentiation.</title>
        <authorList>
            <person name="Rigbolt K.T."/>
            <person name="Prokhorova T.A."/>
            <person name="Akimov V."/>
            <person name="Henningsen J."/>
            <person name="Johansen P.T."/>
            <person name="Kratchmarova I."/>
            <person name="Kassem M."/>
            <person name="Mann M."/>
            <person name="Olsen J.V."/>
            <person name="Blagoev B."/>
        </authorList>
    </citation>
    <scope>IDENTIFICATION BY MASS SPECTROMETRY [LARGE SCALE ANALYSIS]</scope>
</reference>
<reference key="24">
    <citation type="journal article" date="2013" name="J. Proteome Res.">
        <title>Toward a comprehensive characterization of a human cancer cell phosphoproteome.</title>
        <authorList>
            <person name="Zhou H."/>
            <person name="Di Palma S."/>
            <person name="Preisinger C."/>
            <person name="Peng M."/>
            <person name="Polat A.N."/>
            <person name="Heck A.J."/>
            <person name="Mohammed S."/>
        </authorList>
    </citation>
    <scope>PHOSPHORYLATION [LARGE SCALE ANALYSIS] AT SER-123; SER-128; SER-133 AND SER-136</scope>
    <scope>IDENTIFICATION BY MASS SPECTROMETRY [LARGE SCALE ANALYSIS]</scope>
    <source>
        <tissue>Cervix carcinoma</tissue>
        <tissue>Erythroleukemia</tissue>
    </source>
</reference>
<reference key="25">
    <citation type="journal article" date="2014" name="J. Proteomics">
        <title>An enzyme assisted RP-RPLC approach for in-depth analysis of human liver phosphoproteome.</title>
        <authorList>
            <person name="Bian Y."/>
            <person name="Song C."/>
            <person name="Cheng K."/>
            <person name="Dong M."/>
            <person name="Wang F."/>
            <person name="Huang J."/>
            <person name="Sun D."/>
            <person name="Wang L."/>
            <person name="Ye M."/>
            <person name="Zou H."/>
        </authorList>
    </citation>
    <scope>PHOSPHORYLATION [LARGE SCALE ANALYSIS] AT SER-205 AND SER-295</scope>
    <scope>IDENTIFICATION BY MASS SPECTROMETRY [LARGE SCALE ANALYSIS]</scope>
    <source>
        <tissue>Liver</tissue>
    </source>
</reference>
<reference key="26">
    <citation type="journal article" date="2019" name="J. Biol. Chem.">
        <title>Physiological and pathophysiological characteristics of ataxin-3 isoforms.</title>
        <authorList>
            <person name="Weishaeupl D."/>
            <person name="Schneider J."/>
            <person name="Peixoto Pinheiro B."/>
            <person name="Ruess C."/>
            <person name="Dold S.M."/>
            <person name="von Zweydorf F."/>
            <person name="Gloeckner C.J."/>
            <person name="Schmidt J."/>
            <person name="Riess O."/>
            <person name="Schmidt T."/>
        </authorList>
    </citation>
    <scope>INTERACTION WITH ATXN3</scope>
</reference>
<reference key="27">
    <citation type="journal article" date="1998" name="Nat. Struct. Biol.">
        <title>Structure of a human DNA repair protein UBA domain that interacts with HIV-1 Vpr.</title>
        <authorList>
            <person name="Dieckmann T."/>
            <person name="Withers-Ward E.S."/>
            <person name="Jarosinski M.A."/>
            <person name="Liu C.F."/>
            <person name="Chen I.S.Y."/>
            <person name="Feigon J."/>
        </authorList>
    </citation>
    <scope>STRUCTURE BY NMR OF 319-363</scope>
</reference>
<reference key="28">
    <citation type="journal article" date="2000" name="Biochemistry">
        <title>Biochemical and structural analysis of the interaction between the UBA(2) domain of the DNA repair protein HHR23A and HIV-1 Vpr.</title>
        <authorList>
            <person name="Withers-Ward E.S."/>
            <person name="Mueller T.D."/>
            <person name="Chen I.S.Y."/>
            <person name="Feigon J."/>
        </authorList>
    </citation>
    <scope>STRUCTURE BY NMR OF 319-363</scope>
    <scope>INTERACTION WITH HIV-1 VPR (MICROBIAL INFECTION)</scope>
    <scope>MUTAGENESIS OF PRO-333</scope>
</reference>
<reference key="29">
    <citation type="journal article" date="2002" name="J. Mol. Biol.">
        <title>Solution structures of UBA domains reveal a conserved hydrophobic surface for protein-protein interactions.</title>
        <authorList>
            <person name="Mueller T.D."/>
            <person name="Feigon J."/>
        </authorList>
    </citation>
    <scope>STRUCTURE BY NMR OF 156-204</scope>
</reference>
<reference key="30">
    <citation type="journal article" date="2003" name="EMBO J.">
        <title>Structural determinants for the binding of ubiquitin-like domains to the proteasome.</title>
        <authorList>
            <person name="Mueller T.D."/>
            <person name="Feigon J."/>
        </authorList>
    </citation>
    <scope>STRUCTURE BY NMR OF 1-78</scope>
    <scope>INTERACTION WITH PSMD4</scope>
    <scope>MUTAGENESIS OF ILE-49; ILE-54; PHE-71 AND THR-77</scope>
</reference>
<reference key="31">
    <citation type="journal article" date="2003" name="Proc. Natl. Acad. Sci. U.S.A.">
        <title>DNA-repair protein hHR23a alters its protein structure upon binding proteasomal subunit S5a.</title>
        <authorList>
            <person name="Walters K.J."/>
            <person name="Lech P.J."/>
            <person name="Goh A.M."/>
            <person name="Wang Q."/>
            <person name="Howley P.M."/>
        </authorList>
    </citation>
    <scope>STRUCTURE BY NMR OF 2-363</scope>
    <scope>INTERACTION WITH PSMD4</scope>
    <scope>MUTAGENESIS OF THR-9 AND ILE-49</scope>
</reference>
<reference key="32">
    <citation type="journal article" date="2004" name="Protein Sci.">
        <title>Structure of the XPC binding domain of hHR23A reveals hydrophobic patches for protein interaction.</title>
        <authorList>
            <person name="Kamionka M."/>
            <person name="Feigon J."/>
        </authorList>
    </citation>
    <scope>STRUCTURE BY NMR OF 223-317</scope>
</reference>
<reference key="33">
    <citation type="journal article" date="2005" name="Mol. Cell">
        <title>Structural determinants for selective recognition of a Lys48-linked polyubiquitin chain by a UBA domain.</title>
        <authorList>
            <person name="Varadan R."/>
            <person name="Assfalg M."/>
            <person name="Raasi S."/>
            <person name="Pickart C."/>
            <person name="Fushman D."/>
        </authorList>
    </citation>
    <scope>3D-STRUCTURE MODELING OF 315-363</scope>
</reference>
<comment type="function">
    <text>Multiubiquitin chain receptor involved in modulation of proteasomal degradation. Binds to 'Lys-48'-linked polyubiquitin chains in a length-dependent manner and with a lower affinity to 'Lys-63'-linked polyubiquitin chains. Proposed to be capable to bind simultaneously to the 26S proteasome and to polyubiquitinated substrates and to deliver ubiquitinated proteins to the proteasome.</text>
</comment>
<comment type="function">
    <text>Involved in nucleotide excision repair and is thought to be functional equivalent for RAD23B in global genome nucleotide excision repair (GG-NER) by association with XPC. In vitro, the XPC:RAD23A dimer has NER activity. Can stabilize XPC.</text>
</comment>
<comment type="function">
    <text evidence="13">(Microbial infection) Involved in Vpr-dependent replication of HIV-1 in non-proliferating cells and primary macrophages. Required for the association of HIV-1 Vpr with the host proteasome.</text>
</comment>
<comment type="subunit">
    <text evidence="5 6 8 9 10 11 14">Interacts with XPC; the interaction is suggesting the existence of a functional equivalent variant XPC complex. Interacts with PSMD4 and PSMC5. Interacts with ATXN3 (PubMed:30455355). Interacts with UBQLN2.</text>
</comment>
<comment type="subunit">
    <text evidence="7 15">(Microbial infection) Interacts with HIV-1 Vpr.</text>
</comment>
<comment type="interaction">
    <interactant intactId="EBI-746453">
        <id>P54725</id>
    </interactant>
    <interactant intactId="EBI-2838246">
        <id>Q6AI12</id>
        <label>ANKRD40</label>
    </interactant>
    <organismsDiffer>false</organismsDiffer>
    <experiments>3</experiments>
</comment>
<comment type="interaction">
    <interactant intactId="EBI-746453">
        <id>P54725</id>
    </interactant>
    <interactant intactId="EBI-2875816">
        <id>Q9NP61</id>
        <label>ARFGAP3</label>
    </interactant>
    <organismsDiffer>false</organismsDiffer>
    <experiments>3</experiments>
</comment>
<comment type="interaction">
    <interactant intactId="EBI-746453">
        <id>P54725</id>
    </interactant>
    <interactant intactId="EBI-930964">
        <id>P54253</id>
        <label>ATXN1</label>
    </interactant>
    <organismsDiffer>false</organismsDiffer>
    <experiments>3</experiments>
</comment>
<comment type="interaction">
    <interactant intactId="EBI-746453">
        <id>P54725</id>
    </interactant>
    <interactant intactId="EBI-946046">
        <id>P54252</id>
        <label>ATXN3</label>
    </interactant>
    <organismsDiffer>false</organismsDiffer>
    <experiments>9</experiments>
</comment>
<comment type="interaction">
    <interactant intactId="EBI-746453">
        <id>P54725</id>
    </interactant>
    <interactant intactId="EBI-12928880">
        <id>Q4VBR4</id>
        <label>ATXN3</label>
    </interactant>
    <organismsDiffer>false</organismsDiffer>
    <experiments>6</experiments>
</comment>
<comment type="interaction">
    <interactant intactId="EBI-746453">
        <id>P54725</id>
    </interactant>
    <interactant intactId="EBI-947360">
        <id>Q8N137</id>
        <label>CNTROB</label>
    </interactant>
    <organismsDiffer>false</organismsDiffer>
    <experiments>3</experiments>
</comment>
<comment type="interaction">
    <interactant intactId="EBI-746453">
        <id>P54725</id>
    </interactant>
    <interactant intactId="EBI-9087876">
        <id>P48730-2</id>
        <label>CSNK1D</label>
    </interactant>
    <organismsDiffer>false</organismsDiffer>
    <experiments>3</experiments>
</comment>
<comment type="interaction">
    <interactant intactId="EBI-746453">
        <id>P54725</id>
    </interactant>
    <interactant intactId="EBI-724310">
        <id>Q15038</id>
        <label>DAZAP2</label>
    </interactant>
    <organismsDiffer>false</organismsDiffer>
    <experiments>3</experiments>
</comment>
<comment type="interaction">
    <interactant intactId="EBI-746453">
        <id>P54725</id>
    </interactant>
    <interactant intactId="EBI-352162">
        <id>P68104</id>
        <label>EEF1A1</label>
    </interactant>
    <organismsDiffer>false</organismsDiffer>
    <experiments>2</experiments>
</comment>
<comment type="interaction">
    <interactant intactId="EBI-746453">
        <id>P54725</id>
    </interactant>
    <interactant intactId="EBI-21603100">
        <id>P26378-2</id>
        <label>ELAVL4</label>
    </interactant>
    <organismsDiffer>false</organismsDiffer>
    <experiments>3</experiments>
</comment>
<comment type="interaction">
    <interactant intactId="EBI-746453">
        <id>P54725</id>
    </interactant>
    <interactant intactId="EBI-10220102">
        <id>B7ZLH0</id>
        <label>FAM22F</label>
    </interactant>
    <organismsDiffer>false</organismsDiffer>
    <experiments>3</experiments>
</comment>
<comment type="interaction">
    <interactant intactId="EBI-746453">
        <id>P54725</id>
    </interactant>
    <interactant intactId="EBI-466029">
        <id>P42858</id>
        <label>HTT</label>
    </interactant>
    <organismsDiffer>false</organismsDiffer>
    <experiments>3</experiments>
</comment>
<comment type="interaction">
    <interactant intactId="EBI-746453">
        <id>P54725</id>
    </interactant>
    <interactant intactId="EBI-298282">
        <id>P06756</id>
        <label>ITGAV</label>
    </interactant>
    <organismsDiffer>false</organismsDiffer>
    <experiments>3</experiments>
</comment>
<comment type="interaction">
    <interactant intactId="EBI-746453">
        <id>P54725</id>
    </interactant>
    <interactant intactId="EBI-10176379">
        <id>P59991</id>
        <label>KRTAP12-2</label>
    </interactant>
    <organismsDiffer>false</organismsDiffer>
    <experiments>3</experiments>
</comment>
<comment type="interaction">
    <interactant intactId="EBI-746453">
        <id>P54725</id>
    </interactant>
    <interactant intactId="EBI-724928">
        <id>Q9H8M7</id>
        <label>MINDY3</label>
    </interactant>
    <organismsDiffer>false</organismsDiffer>
    <experiments>7</experiments>
</comment>
<comment type="interaction">
    <interactant intactId="EBI-746453">
        <id>P54725</id>
    </interactant>
    <interactant intactId="EBI-373524">
        <id>Q9UHC7</id>
        <label>MKRN1</label>
    </interactant>
    <organismsDiffer>false</organismsDiffer>
    <experiments>5</experiments>
</comment>
<comment type="interaction">
    <interactant intactId="EBI-746453">
        <id>P54725</id>
    </interactant>
    <interactant intactId="EBI-716247">
        <id>Q15843</id>
        <label>NEDD8</label>
    </interactant>
    <organismsDiffer>false</organismsDiffer>
    <experiments>2</experiments>
</comment>
<comment type="interaction">
    <interactant intactId="EBI-746453">
        <id>P54725</id>
    </interactant>
    <interactant intactId="EBI-6165879">
        <id>Q96IV0</id>
        <label>NGLY1</label>
    </interactant>
    <organismsDiffer>false</organismsDiffer>
    <experiments>13</experiments>
</comment>
<comment type="interaction">
    <interactant intactId="EBI-746453">
        <id>P54725</id>
    </interactant>
    <interactant intactId="EBI-18063495">
        <id>Q8TBJ4</id>
        <label>PLPPR1</label>
    </interactant>
    <organismsDiffer>false</organismsDiffer>
    <experiments>3</experiments>
</comment>
<comment type="interaction">
    <interactant intactId="EBI-746453">
        <id>P54725</id>
    </interactant>
    <interactant intactId="EBI-78615">
        <id>Q07869</id>
        <label>PPARA</label>
    </interactant>
    <organismsDiffer>false</organismsDiffer>
    <experiments>3</experiments>
</comment>
<comment type="interaction">
    <interactant intactId="EBI-746453">
        <id>P54725</id>
    </interactant>
    <interactant intactId="EBI-357648">
        <id>Q13200</id>
        <label>PSMD2</label>
    </interactant>
    <organismsDiffer>false</organismsDiffer>
    <experiments>3</experiments>
</comment>
<comment type="interaction">
    <interactant intactId="EBI-746453">
        <id>P54725</id>
    </interactant>
    <interactant intactId="EBI-359318">
        <id>P55036</id>
        <label>PSMD4</label>
    </interactant>
    <organismsDiffer>false</organismsDiffer>
    <experiments>16</experiments>
</comment>
<comment type="interaction">
    <interactant intactId="EBI-746453">
        <id>P54725</id>
    </interactant>
    <interactant intactId="EBI-14093916">
        <id>Q9UJ41-4</id>
        <label>RABGEF1</label>
    </interactant>
    <organismsDiffer>false</organismsDiffer>
    <experiments>3</experiments>
</comment>
<comment type="interaction">
    <interactant intactId="EBI-746453">
        <id>P54725</id>
    </interactant>
    <interactant intactId="EBI-10829018">
        <id>Q04864-2</id>
        <label>REL</label>
    </interactant>
    <organismsDiffer>false</organismsDiffer>
    <experiments>3</experiments>
</comment>
<comment type="interaction">
    <interactant intactId="EBI-746453">
        <id>P54725</id>
    </interactant>
    <interactant intactId="EBI-17589229">
        <id>Q6NTF9-3</id>
        <label>RHBDD2</label>
    </interactant>
    <organismsDiffer>false</organismsDiffer>
    <experiments>3</experiments>
</comment>
<comment type="interaction">
    <interactant intactId="EBI-746453">
        <id>P54725</id>
    </interactant>
    <interactant intactId="EBI-2130266">
        <id>Q9H4P4</id>
        <label>RNF41</label>
    </interactant>
    <organismsDiffer>false</organismsDiffer>
    <experiments>3</experiments>
</comment>
<comment type="interaction">
    <interactant intactId="EBI-746453">
        <id>P54725</id>
    </interactant>
    <interactant intactId="EBI-357375">
        <id>P62979</id>
        <label>RPS27A</label>
    </interactant>
    <organismsDiffer>false</organismsDiffer>
    <experiments>3</experiments>
</comment>
<comment type="interaction">
    <interactant intactId="EBI-746453">
        <id>P54725</id>
    </interactant>
    <interactant intactId="EBI-5663553">
        <id>Q16586</id>
        <label>SGCA</label>
    </interactant>
    <organismsDiffer>false</organismsDiffer>
    <experiments>3</experiments>
</comment>
<comment type="interaction">
    <interactant intactId="EBI-746453">
        <id>P54725</id>
    </interactant>
    <interactant intactId="EBI-21504521">
        <id>Q8NCS7</id>
        <label>SLC44A5</label>
    </interactant>
    <organismsDiffer>false</organismsDiffer>
    <experiments>3</experiments>
</comment>
<comment type="interaction">
    <interactant intactId="EBI-746453">
        <id>P54725</id>
    </interactant>
    <interactant intactId="EBI-307104">
        <id>Q13501</id>
        <label>SQSTM1</label>
    </interactant>
    <organismsDiffer>false</organismsDiffer>
    <experiments>3</experiments>
</comment>
<comment type="interaction">
    <interactant intactId="EBI-746453">
        <id>P54725</id>
    </interactant>
    <interactant intactId="EBI-349968">
        <id>O43463</id>
        <label>SUV39H1</label>
    </interactant>
    <organismsDiffer>false</organismsDiffer>
    <experiments>3</experiments>
</comment>
<comment type="interaction">
    <interactant intactId="EBI-746453">
        <id>P54725</id>
    </interactant>
    <interactant intactId="EBI-527670">
        <id>P21580</id>
        <label>TNFAIP3</label>
    </interactant>
    <organismsDiffer>false</organismsDiffer>
    <experiments>3</experiments>
</comment>
<comment type="interaction">
    <interactant intactId="EBI-746453">
        <id>P54725</id>
    </interactant>
    <interactant intactId="EBI-355744">
        <id>Q12933</id>
        <label>TRAF2</label>
    </interactant>
    <organismsDiffer>false</organismsDiffer>
    <experiments>8</experiments>
</comment>
<comment type="interaction">
    <interactant intactId="EBI-746453">
        <id>P54725</id>
    </interactant>
    <interactant intactId="EBI-357631">
        <id>Q13114</id>
        <label>TRAF3</label>
    </interactant>
    <organismsDiffer>false</organismsDiffer>
    <experiments>3</experiments>
</comment>
<comment type="interaction">
    <interactant intactId="EBI-746453">
        <id>P54725</id>
    </interactant>
    <interactant intactId="EBI-765817">
        <id>Q9Y228</id>
        <label>TRAF3IP3</label>
    </interactant>
    <organismsDiffer>false</organismsDiffer>
    <experiments>3</experiments>
</comment>
<comment type="interaction">
    <interactant intactId="EBI-746453">
        <id>P54725</id>
    </interactant>
    <interactant intactId="EBI-523498">
        <id>O00463</id>
        <label>TRAF5</label>
    </interactant>
    <organismsDiffer>false</organismsDiffer>
    <experiments>3</experiments>
</comment>
<comment type="interaction">
    <interactant intactId="EBI-746453">
        <id>P54725</id>
    </interactant>
    <interactant intactId="EBI-359276">
        <id>Q9Y4K3</id>
        <label>TRAF6</label>
    </interactant>
    <organismsDiffer>false</organismsDiffer>
    <experiments>3</experiments>
</comment>
<comment type="interaction">
    <interactant intactId="EBI-746453">
        <id>P54725</id>
    </interactant>
    <interactant intactId="EBI-11523450">
        <id>Q9HCM9-2</id>
        <label>TRIM39</label>
    </interactant>
    <organismsDiffer>false</organismsDiffer>
    <experiments>3</experiments>
</comment>
<comment type="interaction">
    <interactant intactId="EBI-746453">
        <id>P54725</id>
    </interactant>
    <interactant intactId="EBI-9867283">
        <id>Q86XT4</id>
        <label>TRIM50</label>
    </interactant>
    <organismsDiffer>false</organismsDiffer>
    <experiments>3</experiments>
</comment>
<comment type="interaction">
    <interactant intactId="EBI-746453">
        <id>P54725</id>
    </interactant>
    <interactant intactId="EBI-2130429">
        <id>Q9BYV2</id>
        <label>TRIM54</label>
    </interactant>
    <organismsDiffer>false</organismsDiffer>
    <experiments>3</experiments>
</comment>
<comment type="interaction">
    <interactant intactId="EBI-746453">
        <id>P54725</id>
    </interactant>
    <interactant intactId="EBI-11522718">
        <id>Q9BYV6-2</id>
        <label>TRIM55</label>
    </interactant>
    <organismsDiffer>false</organismsDiffer>
    <experiments>3</experiments>
</comment>
<comment type="interaction">
    <interactant intactId="EBI-746453">
        <id>P54725</id>
    </interactant>
    <interactant intactId="EBI-2340370">
        <id>Q9BZR9</id>
        <label>TRIM8</label>
    </interactant>
    <organismsDiffer>false</organismsDiffer>
    <experiments>3</experiments>
</comment>
<comment type="interaction">
    <interactant intactId="EBI-746453">
        <id>P54725</id>
    </interactant>
    <interactant intactId="EBI-742327">
        <id>Q15654</id>
        <label>TRIP6</label>
    </interactant>
    <organismsDiffer>false</organismsDiffer>
    <experiments>3</experiments>
</comment>
<comment type="interaction">
    <interactant intactId="EBI-746453">
        <id>P54725</id>
    </interactant>
    <interactant intactId="EBI-357304">
        <id>P62987</id>
        <label>UBA52</label>
    </interactant>
    <organismsDiffer>false</organismsDiffer>
    <experiments>3</experiments>
</comment>
<comment type="interaction">
    <interactant intactId="EBI-746453">
        <id>P54725</id>
    </interactant>
    <interactant intactId="EBI-947187">
        <id>Q9UHD9</id>
        <label>UBQLN2</label>
    </interactant>
    <organismsDiffer>false</organismsDiffer>
    <experiments>6</experiments>
</comment>
<comment type="interaction">
    <interactant intactId="EBI-746453">
        <id>P54725</id>
    </interactant>
    <interactant intactId="EBI-11530712">
        <id>Q04323-2</id>
        <label>UBXN1</label>
    </interactant>
    <organismsDiffer>false</organismsDiffer>
    <experiments>3</experiments>
</comment>
<comment type="interaction">
    <interactant intactId="EBI-746453">
        <id>P54725</id>
    </interactant>
    <interactant intactId="EBI-17761788">
        <id>Q96RL1-2</id>
        <label>UIMC1</label>
    </interactant>
    <organismsDiffer>false</organismsDiffer>
    <experiments>3</experiments>
</comment>
<comment type="interaction">
    <interactant intactId="EBI-746453">
        <id>P54725</id>
    </interactant>
    <interactant intactId="EBI-2513462">
        <id>Q9UHP3</id>
        <label>USP25</label>
    </interactant>
    <organismsDiffer>false</organismsDiffer>
    <experiments>12</experiments>
</comment>
<comment type="interaction">
    <interactant intactId="EBI-746453">
        <id>P54725</id>
    </interactant>
    <interactant intactId="EBI-765538">
        <id>P25490</id>
        <label>YY1</label>
    </interactant>
    <organismsDiffer>false</organismsDiffer>
    <experiments>3</experiments>
</comment>
<comment type="interaction">
    <interactant intactId="EBI-746453">
        <id>P54725</id>
    </interactant>
    <interactant intactId="EBI-3918996">
        <id>Q9HCK0</id>
        <label>ZBTB26</label>
    </interactant>
    <organismsDiffer>false</organismsDiffer>
    <experiments>3</experiments>
</comment>
<comment type="interaction">
    <interactant intactId="EBI-746453">
        <id>P54725</id>
    </interactant>
    <interactant intactId="EBI-5658292">
        <id>Q8NCP5</id>
        <label>ZBTB44</label>
    </interactant>
    <organismsDiffer>false</organismsDiffer>
    <experiments>3</experiments>
</comment>
<comment type="interaction">
    <interactant intactId="EBI-746453">
        <id>P54725</id>
    </interactant>
    <interactant intactId="EBI-742740">
        <id>Q96BR9</id>
        <label>ZBTB8A</label>
    </interactant>
    <organismsDiffer>false</organismsDiffer>
    <experiments>6</experiments>
</comment>
<comment type="interaction">
    <interactant intactId="EBI-746453">
        <id>P54725</id>
    </interactant>
    <interactant intactId="EBI-724630">
        <id>Q6FIF0</id>
        <label>ZFAND6</label>
    </interactant>
    <organismsDiffer>false</organismsDiffer>
    <experiments>3</experiments>
</comment>
<comment type="interaction">
    <interactant intactId="EBI-746453">
        <id>P54725</id>
    </interactant>
    <interactant intactId="EBI-3648128">
        <id>Q9JI78</id>
        <label>Ngly1</label>
    </interactant>
    <organismsDiffer>true</organismsDiffer>
    <experiments>2</experiments>
</comment>
<comment type="subcellular location">
    <subcellularLocation>
        <location>Nucleus</location>
    </subcellularLocation>
</comment>
<comment type="alternative products">
    <event type="alternative splicing"/>
    <isoform>
        <id>P54725-1</id>
        <name>1</name>
        <sequence type="displayed"/>
    </isoform>
    <isoform>
        <id>P54725-2</id>
        <name>2</name>
        <sequence type="described" ref="VSP_047565"/>
    </isoform>
    <isoform>
        <id>P54725-3</id>
        <name>3</name>
        <sequence type="described" ref="VSP_054694"/>
    </isoform>
</comment>
<comment type="domain">
    <text>The ubiquitin-like domain mediates interaction with ATXN3.</text>
</comment>
<comment type="domain">
    <text>The ubiquitin-like (UBL) and the UBA (ubiquitin-associated) domains interact intramolecularly in a highly dynamic manner, as each UBA domain competes for an overlapping UBL domain surface. Binding of ubiquitin or proteasome subunit PSMD4 disrupt the UBL-UBA domain interactions and drive RAD23A in to an open conformation.</text>
</comment>
<comment type="similarity">
    <text evidence="21">Belongs to the RAD23 family.</text>
</comment>
<comment type="sequence caution" evidence="21">
    <conflict type="erroneous initiation">
        <sequence resource="EMBL-CDS" id="BAD92950"/>
    </conflict>
    <text>Extended N-terminus.</text>
</comment>
<comment type="sequence caution" evidence="21">
    <conflict type="frameshift">
        <sequence resource="EMBL" id="BX448989"/>
    </conflict>
</comment>
<name>RD23A_HUMAN</name>
<sequence>MAVTITLKTLQQQTFKIRMEPDETVKVLKEKIEAEKGRDAFPVAGQKLIYAGKILSDDVPIRDYRIDEKNFVVVMVTKTKAGQGTSAPPEASPTAAPESSTSFPPAPTSGMSHPPPAAREDKSPSEESAPTTSPESVSGSVPSSGSSGREEDAASTLVTGSEYETMLTEIMSMGYERERVVAALRASYNNPHRAVEYLLTGIPGSPEPEHGSVQESQVSEQPATEAAGENPLEFLRDQPQFQNMRQVIQQNPALLPALLQQLGQENPQLLQQISRHQEQFIQMLNEPPGELADISDVEGEVGAIGEEAPQMNYIQVTPQEKEAIERLKALGFPESLVIQAYFACEKNENLAANFLLSQNFDDE</sequence>
<protein>
    <recommendedName>
        <fullName>UV excision repair protein RAD23 homolog A</fullName>
        <shortName>HR23A</shortName>
        <shortName>hHR23A</shortName>
    </recommendedName>
</protein>
<accession>P54725</accession>
<accession>K7ESE3</accession>
<accession>Q59EU8</accession>
<accession>Q5M7Z1</accession>
<gene>
    <name type="primary">RAD23A</name>
</gene>